<keyword id="KW-0012">Acyltransferase</keyword>
<keyword id="KW-1185">Reference proteome</keyword>
<keyword id="KW-0808">Transferase</keyword>
<comment type="function">
    <text evidence="1">Putative gamma-glutamylcyclotransferase.</text>
</comment>
<comment type="similarity">
    <text evidence="2">Belongs to the gamma-glutamylcyclotransferase family.</text>
</comment>
<evidence type="ECO:0000250" key="1"/>
<evidence type="ECO:0000305" key="2"/>
<name>Y2546_VIBCH</name>
<accession>Q9KP33</accession>
<proteinExistence type="inferred from homology"/>
<reference key="1">
    <citation type="journal article" date="2000" name="Nature">
        <title>DNA sequence of both chromosomes of the cholera pathogen Vibrio cholerae.</title>
        <authorList>
            <person name="Heidelberg J.F."/>
            <person name="Eisen J.A."/>
            <person name="Nelson W.C."/>
            <person name="Clayton R.A."/>
            <person name="Gwinn M.L."/>
            <person name="Dodson R.J."/>
            <person name="Haft D.H."/>
            <person name="Hickey E.K."/>
            <person name="Peterson J.D."/>
            <person name="Umayam L.A."/>
            <person name="Gill S.R."/>
            <person name="Nelson K.E."/>
            <person name="Read T.D."/>
            <person name="Tettelin H."/>
            <person name="Richardson D.L."/>
            <person name="Ermolaeva M.D."/>
            <person name="Vamathevan J.J."/>
            <person name="Bass S."/>
            <person name="Qin H."/>
            <person name="Dragoi I."/>
            <person name="Sellers P."/>
            <person name="McDonald L.A."/>
            <person name="Utterback T.R."/>
            <person name="Fleischmann R.D."/>
            <person name="Nierman W.C."/>
            <person name="White O."/>
            <person name="Salzberg S.L."/>
            <person name="Smith H.O."/>
            <person name="Colwell R.R."/>
            <person name="Mekalanos J.J."/>
            <person name="Venter J.C."/>
            <person name="Fraser C.M."/>
        </authorList>
    </citation>
    <scope>NUCLEOTIDE SEQUENCE [LARGE SCALE GENOMIC DNA]</scope>
    <source>
        <strain>ATCC 39315 / El Tor Inaba N16961</strain>
    </source>
</reference>
<protein>
    <recommendedName>
        <fullName>Putative gamma-glutamylcyclotransferase VC_2546</fullName>
        <ecNumber>2.3.2.-</ecNumber>
    </recommendedName>
</protein>
<gene>
    <name type="ordered locus">VC_2546</name>
</gene>
<feature type="chain" id="PRO_0000184793" description="Putative gamma-glutamylcyclotransferase VC_2546">
    <location>
        <begin position="1"/>
        <end position="115"/>
    </location>
</feature>
<feature type="active site" description="Proton acceptor" evidence="1">
    <location>
        <position position="73"/>
    </location>
</feature>
<feature type="binding site" evidence="1">
    <location>
        <begin position="8"/>
        <end position="11"/>
    </location>
    <ligand>
        <name>substrate</name>
    </ligand>
</feature>
<sequence>MQHLVFVYGTLRHGESNHTYLQHSQLLGQFETKPEYALYDLGAYPGLVEGHQSVHGEVYLVDEHTLAQLDILEDVPVEYRRDTIETPFGTAWIYIYQETHRLHSLIDSGDWCQRV</sequence>
<dbReference type="EC" id="2.3.2.-"/>
<dbReference type="EMBL" id="AE003852">
    <property type="protein sequence ID" value="AAF95687.1"/>
    <property type="molecule type" value="Genomic_DNA"/>
</dbReference>
<dbReference type="PIR" id="D82064">
    <property type="entry name" value="D82064"/>
</dbReference>
<dbReference type="RefSeq" id="NP_232174.1">
    <property type="nucleotide sequence ID" value="NC_002505.1"/>
</dbReference>
<dbReference type="RefSeq" id="WP_001164258.1">
    <property type="nucleotide sequence ID" value="NZ_LT906614.1"/>
</dbReference>
<dbReference type="SMR" id="Q9KP33"/>
<dbReference type="STRING" id="243277.VC_2546"/>
<dbReference type="DNASU" id="2615563"/>
<dbReference type="EnsemblBacteria" id="AAF95687">
    <property type="protein sequence ID" value="AAF95687"/>
    <property type="gene ID" value="VC_2546"/>
</dbReference>
<dbReference type="KEGG" id="vch:VC_2546"/>
<dbReference type="PATRIC" id="fig|243277.26.peg.2424"/>
<dbReference type="eggNOG" id="COG2105">
    <property type="taxonomic scope" value="Bacteria"/>
</dbReference>
<dbReference type="HOGENOM" id="CLU_083466_5_2_6"/>
<dbReference type="Proteomes" id="UP000000584">
    <property type="component" value="Chromosome 1"/>
</dbReference>
<dbReference type="GO" id="GO:0005829">
    <property type="term" value="C:cytosol"/>
    <property type="evidence" value="ECO:0000318"/>
    <property type="project" value="GO_Central"/>
</dbReference>
<dbReference type="GO" id="GO:0016746">
    <property type="term" value="F:acyltransferase activity"/>
    <property type="evidence" value="ECO:0007669"/>
    <property type="project" value="UniProtKB-KW"/>
</dbReference>
<dbReference type="GO" id="GO:0061929">
    <property type="term" value="F:gamma-glutamylaminecyclotransferase activity"/>
    <property type="evidence" value="ECO:0007669"/>
    <property type="project" value="InterPro"/>
</dbReference>
<dbReference type="CDD" id="cd06661">
    <property type="entry name" value="GGCT_like"/>
    <property type="match status" value="1"/>
</dbReference>
<dbReference type="FunFam" id="3.10.490.10:FF:000001">
    <property type="entry name" value="Gamma-glutamylcyclotransferase ytfP"/>
    <property type="match status" value="1"/>
</dbReference>
<dbReference type="Gene3D" id="3.10.490.10">
    <property type="entry name" value="Gamma-glutamyl cyclotransferase-like"/>
    <property type="match status" value="1"/>
</dbReference>
<dbReference type="InterPro" id="IPR009288">
    <property type="entry name" value="AIG2-like_dom"/>
</dbReference>
<dbReference type="InterPro" id="IPR039126">
    <property type="entry name" value="GGACT"/>
</dbReference>
<dbReference type="InterPro" id="IPR013024">
    <property type="entry name" value="GGCT-like"/>
</dbReference>
<dbReference type="InterPro" id="IPR036568">
    <property type="entry name" value="GGCT-like_sf"/>
</dbReference>
<dbReference type="PANTHER" id="PTHR12510:SF4">
    <property type="entry name" value="GAMMA-GLUTAMYLAMINECYCLOTRANSFERASE"/>
    <property type="match status" value="1"/>
</dbReference>
<dbReference type="PANTHER" id="PTHR12510">
    <property type="entry name" value="TROPONIN C-AKIN-1 PROTEIN"/>
    <property type="match status" value="1"/>
</dbReference>
<dbReference type="Pfam" id="PF06094">
    <property type="entry name" value="GGACT"/>
    <property type="match status" value="1"/>
</dbReference>
<dbReference type="SUPFAM" id="SSF110857">
    <property type="entry name" value="Gamma-glutamyl cyclotransferase-like"/>
    <property type="match status" value="1"/>
</dbReference>
<organism>
    <name type="scientific">Vibrio cholerae serotype O1 (strain ATCC 39315 / El Tor Inaba N16961)</name>
    <dbReference type="NCBI Taxonomy" id="243277"/>
    <lineage>
        <taxon>Bacteria</taxon>
        <taxon>Pseudomonadati</taxon>
        <taxon>Pseudomonadota</taxon>
        <taxon>Gammaproteobacteria</taxon>
        <taxon>Vibrionales</taxon>
        <taxon>Vibrionaceae</taxon>
        <taxon>Vibrio</taxon>
    </lineage>
</organism>